<protein>
    <recommendedName>
        <fullName evidence="1">Glutamate--tRNA ligase 2</fullName>
        <ecNumber evidence="1">6.1.1.17</ecNumber>
    </recommendedName>
    <alternativeName>
        <fullName evidence="1">Glutamyl-tRNA synthetase 2</fullName>
        <shortName evidence="1">GluRS 2</shortName>
    </alternativeName>
</protein>
<comment type="function">
    <text evidence="1">Catalyzes the attachment of glutamate to tRNA(Glu) in a two-step reaction: glutamate is first activated by ATP to form Glu-AMP and then transferred to the acceptor end of tRNA(Glu).</text>
</comment>
<comment type="catalytic activity">
    <reaction evidence="1">
        <text>tRNA(Glu) + L-glutamate + ATP = L-glutamyl-tRNA(Glu) + AMP + diphosphate</text>
        <dbReference type="Rhea" id="RHEA:23540"/>
        <dbReference type="Rhea" id="RHEA-COMP:9663"/>
        <dbReference type="Rhea" id="RHEA-COMP:9680"/>
        <dbReference type="ChEBI" id="CHEBI:29985"/>
        <dbReference type="ChEBI" id="CHEBI:30616"/>
        <dbReference type="ChEBI" id="CHEBI:33019"/>
        <dbReference type="ChEBI" id="CHEBI:78442"/>
        <dbReference type="ChEBI" id="CHEBI:78520"/>
        <dbReference type="ChEBI" id="CHEBI:456215"/>
        <dbReference type="EC" id="6.1.1.17"/>
    </reaction>
</comment>
<comment type="subunit">
    <text evidence="1">Monomer.</text>
</comment>
<comment type="subcellular location">
    <subcellularLocation>
        <location evidence="1">Cytoplasm</location>
    </subcellularLocation>
</comment>
<comment type="similarity">
    <text evidence="1">Belongs to the class-I aminoacyl-tRNA synthetase family. Glutamate--tRNA ligase type 1 subfamily.</text>
</comment>
<comment type="sequence caution" evidence="2">
    <conflict type="erroneous initiation">
        <sequence resource="EMBL-CDS" id="ABV79408"/>
    </conflict>
</comment>
<proteinExistence type="inferred from homology"/>
<evidence type="ECO:0000255" key="1">
    <source>
        <dbReference type="HAMAP-Rule" id="MF_00022"/>
    </source>
</evidence>
<evidence type="ECO:0000305" key="2"/>
<reference key="1">
    <citation type="submission" date="2007-09" db="EMBL/GenBank/DDBJ databases">
        <title>Complete genome sequencing of Rickettsia bellii.</title>
        <authorList>
            <person name="Madan A."/>
            <person name="Lee H."/>
            <person name="Madan A."/>
            <person name="Yoon J.-G."/>
            <person name="Ryu G.-Y."/>
            <person name="Dasch G."/>
            <person name="Ereemeva M."/>
        </authorList>
    </citation>
    <scope>NUCLEOTIDE SEQUENCE [LARGE SCALE GENOMIC DNA]</scope>
    <source>
        <strain>OSU 85-389</strain>
    </source>
</reference>
<accession>A8GX08</accession>
<organism>
    <name type="scientific">Rickettsia bellii (strain OSU 85-389)</name>
    <dbReference type="NCBI Taxonomy" id="391896"/>
    <lineage>
        <taxon>Bacteria</taxon>
        <taxon>Pseudomonadati</taxon>
        <taxon>Pseudomonadota</taxon>
        <taxon>Alphaproteobacteria</taxon>
        <taxon>Rickettsiales</taxon>
        <taxon>Rickettsiaceae</taxon>
        <taxon>Rickettsieae</taxon>
        <taxon>Rickettsia</taxon>
        <taxon>belli group</taxon>
    </lineage>
</organism>
<name>SYE2_RICB8</name>
<sequence>MTNNVITRFAPSPTGFLHIGSARTALFNYLFAKHNNGKFLLRIEDTDKERSTEAAVEAIFSGLKWLGLNWDDEVVFQSKRNDLYKEAALKLLAEGKAYYCFTPQEEIEKQRQEALENKQHFIFNSKWRDKTSDTYPKDIKPVIRLKTPSSGSITIHDTLQGDVVIENCHIDDMVLLRSDGTATYMLAVVVDDHDMGITHIIRGDDHLTNAARQIAIYNAFGYHVPIMTHIPLIHGADGAKLSKRHGALGVEAYKDMGYLPESLCNYLLRLGWSHGDDEIIQMDQAIEWFNLDSLGKSPARLDFTKMNSLNSHYLRMLDEDSLITKILEILNRNYKVSEQEVNYIRRGLQGLLVRSETLLDLAKLAKIYLVNIPVAYESEAKEIIANCDKNLINNVVQGLEKLERFDKESVQDEFKKIAAANSLKLNEVMKPVRALITGMVGSPSVFEIAEILGKENILKRLEIK</sequence>
<gene>
    <name evidence="1" type="primary">gltX2</name>
    <name type="ordered locus">A1I_05405</name>
</gene>
<dbReference type="EC" id="6.1.1.17" evidence="1"/>
<dbReference type="EMBL" id="CP000849">
    <property type="protein sequence ID" value="ABV79408.1"/>
    <property type="status" value="ALT_INIT"/>
    <property type="molecule type" value="Genomic_DNA"/>
</dbReference>
<dbReference type="SMR" id="A8GX08"/>
<dbReference type="KEGG" id="rbo:A1I_05405"/>
<dbReference type="HOGENOM" id="CLU_015768_6_3_5"/>
<dbReference type="GO" id="GO:0005829">
    <property type="term" value="C:cytosol"/>
    <property type="evidence" value="ECO:0007669"/>
    <property type="project" value="TreeGrafter"/>
</dbReference>
<dbReference type="GO" id="GO:0005524">
    <property type="term" value="F:ATP binding"/>
    <property type="evidence" value="ECO:0007669"/>
    <property type="project" value="UniProtKB-UniRule"/>
</dbReference>
<dbReference type="GO" id="GO:0004818">
    <property type="term" value="F:glutamate-tRNA ligase activity"/>
    <property type="evidence" value="ECO:0007669"/>
    <property type="project" value="UniProtKB-UniRule"/>
</dbReference>
<dbReference type="GO" id="GO:0000049">
    <property type="term" value="F:tRNA binding"/>
    <property type="evidence" value="ECO:0007669"/>
    <property type="project" value="InterPro"/>
</dbReference>
<dbReference type="GO" id="GO:0008270">
    <property type="term" value="F:zinc ion binding"/>
    <property type="evidence" value="ECO:0007669"/>
    <property type="project" value="InterPro"/>
</dbReference>
<dbReference type="GO" id="GO:0006424">
    <property type="term" value="P:glutamyl-tRNA aminoacylation"/>
    <property type="evidence" value="ECO:0007669"/>
    <property type="project" value="UniProtKB-UniRule"/>
</dbReference>
<dbReference type="CDD" id="cd00808">
    <property type="entry name" value="GluRS_core"/>
    <property type="match status" value="1"/>
</dbReference>
<dbReference type="FunFam" id="3.40.50.620:FF:000007">
    <property type="entry name" value="Glutamate--tRNA ligase"/>
    <property type="match status" value="1"/>
</dbReference>
<dbReference type="Gene3D" id="1.10.10.350">
    <property type="match status" value="1"/>
</dbReference>
<dbReference type="Gene3D" id="3.40.50.620">
    <property type="entry name" value="HUPs"/>
    <property type="match status" value="1"/>
</dbReference>
<dbReference type="HAMAP" id="MF_00022">
    <property type="entry name" value="Glu_tRNA_synth_type1"/>
    <property type="match status" value="1"/>
</dbReference>
<dbReference type="InterPro" id="IPR045462">
    <property type="entry name" value="aa-tRNA-synth_I_cd-bd"/>
</dbReference>
<dbReference type="InterPro" id="IPR020751">
    <property type="entry name" value="aa-tRNA-synth_I_codon-bd_sub2"/>
</dbReference>
<dbReference type="InterPro" id="IPR008925">
    <property type="entry name" value="aa_tRNA-synth_I_cd-bd_sf"/>
</dbReference>
<dbReference type="InterPro" id="IPR004527">
    <property type="entry name" value="Glu-tRNA-ligase_bac/mito"/>
</dbReference>
<dbReference type="InterPro" id="IPR000924">
    <property type="entry name" value="Glu/Gln-tRNA-synth"/>
</dbReference>
<dbReference type="InterPro" id="IPR020058">
    <property type="entry name" value="Glu/Gln-tRNA-synth_Ib_cat-dom"/>
</dbReference>
<dbReference type="InterPro" id="IPR049940">
    <property type="entry name" value="GluQ/Sye"/>
</dbReference>
<dbReference type="InterPro" id="IPR033910">
    <property type="entry name" value="GluRS_core"/>
</dbReference>
<dbReference type="InterPro" id="IPR014729">
    <property type="entry name" value="Rossmann-like_a/b/a_fold"/>
</dbReference>
<dbReference type="NCBIfam" id="TIGR00464">
    <property type="entry name" value="gltX_bact"/>
    <property type="match status" value="1"/>
</dbReference>
<dbReference type="PANTHER" id="PTHR43311">
    <property type="entry name" value="GLUTAMATE--TRNA LIGASE"/>
    <property type="match status" value="1"/>
</dbReference>
<dbReference type="PANTHER" id="PTHR43311:SF2">
    <property type="entry name" value="GLUTAMATE--TRNA LIGASE, MITOCHONDRIAL-RELATED"/>
    <property type="match status" value="1"/>
</dbReference>
<dbReference type="Pfam" id="PF19269">
    <property type="entry name" value="Anticodon_2"/>
    <property type="match status" value="1"/>
</dbReference>
<dbReference type="Pfam" id="PF00749">
    <property type="entry name" value="tRNA-synt_1c"/>
    <property type="match status" value="1"/>
</dbReference>
<dbReference type="PRINTS" id="PR00987">
    <property type="entry name" value="TRNASYNTHGLU"/>
</dbReference>
<dbReference type="SUPFAM" id="SSF48163">
    <property type="entry name" value="An anticodon-binding domain of class I aminoacyl-tRNA synthetases"/>
    <property type="match status" value="1"/>
</dbReference>
<dbReference type="SUPFAM" id="SSF52374">
    <property type="entry name" value="Nucleotidylyl transferase"/>
    <property type="match status" value="1"/>
</dbReference>
<feature type="chain" id="PRO_0000367755" description="Glutamate--tRNA ligase 2">
    <location>
        <begin position="1"/>
        <end position="464"/>
    </location>
</feature>
<feature type="short sequence motif" description="'HIGH' region" evidence="1">
    <location>
        <begin position="11"/>
        <end position="21"/>
    </location>
</feature>
<feature type="short sequence motif" description="'KMSKS' region" evidence="1">
    <location>
        <begin position="240"/>
        <end position="244"/>
    </location>
</feature>
<feature type="binding site" evidence="1">
    <location>
        <position position="243"/>
    </location>
    <ligand>
        <name>ATP</name>
        <dbReference type="ChEBI" id="CHEBI:30616"/>
    </ligand>
</feature>
<keyword id="KW-0030">Aminoacyl-tRNA synthetase</keyword>
<keyword id="KW-0067">ATP-binding</keyword>
<keyword id="KW-0963">Cytoplasm</keyword>
<keyword id="KW-0436">Ligase</keyword>
<keyword id="KW-0547">Nucleotide-binding</keyword>
<keyword id="KW-0648">Protein biosynthesis</keyword>